<keyword id="KW-0002">3D-structure</keyword>
<keyword id="KW-0025">Alternative splicing</keyword>
<keyword id="KW-0053">Apoptosis</keyword>
<keyword id="KW-0067">ATP-binding</keyword>
<keyword id="KW-0391">Immunity</keyword>
<keyword id="KW-0395">Inflammatory response</keyword>
<keyword id="KW-0399">Innate immunity</keyword>
<keyword id="KW-0479">Metal-binding</keyword>
<keyword id="KW-0547">Nucleotide-binding</keyword>
<keyword id="KW-0646">Protease inhibitor</keyword>
<keyword id="KW-1267">Proteomics identification</keyword>
<keyword id="KW-1185">Reference proteome</keyword>
<keyword id="KW-0677">Repeat</keyword>
<keyword id="KW-0789">Thiol protease inhibitor</keyword>
<keyword id="KW-0862">Zinc</keyword>
<comment type="function">
    <text>Anti-apoptotic protein which acts by inhibiting the activities of CASP3, CASP7 and CASP9. Can inhibit the autocleavage of pro-CASP9 and cleavage of pro-CASP3 by CASP9. Capable of inhibiting CASP9 autoproteolysis at 'Asp-315' and decreasing the rate of auto proteolysis at 'Asp-330'. Acts as a mediator of neuronal survival in pathological conditions. Prevents motor-neuron apoptosis induced by a variety of signals. Possible role in the prevention of spinal muscular atrophy that seems to be caused by inappropriate persistence of motor-neuron apoptosis: mutated or deleted forms of NAIP have been found in individuals with severe spinal muscular atrophy.</text>
</comment>
<comment type="function">
    <text>Acts as a sensor component of the NLRC4 inflammasome that specifically recognizes and binds needle protein CprI from pathogenic bacteria C.violaceum. Association of pathogenic bacteria proteins drives in turn drive assembly and activation of the NLRC4 inflammasome, promoting caspase-1 activation, cytokine production and macrophage pyroptosis. The NLRC4 inflammasome is activated as part of the innate immune response to a range of intracellular bacteria such as C.violaceum and L.pneumophila.</text>
</comment>
<comment type="subunit">
    <text evidence="6 7 8">Interacts (via NACHT domain) with APAF1 (via CARD and NACHT domains). Interacts with C.violaceum needle protein CprI.</text>
</comment>
<comment type="alternative products">
    <event type="alternative splicing"/>
    <isoform>
        <id>Q13075-1</id>
        <name>1</name>
        <sequence type="displayed"/>
    </isoform>
    <isoform>
        <id>Q13075-2</id>
        <name>2</name>
        <sequence type="described" ref="VSP_047196 VSP_047197"/>
    </isoform>
</comment>
<comment type="tissue specificity">
    <text>Expressed in motor neurons, but not in sensory neurons. Found in liver and placenta, and to a lesser extent in spinal cord.</text>
</comment>
<comment type="domain">
    <text evidence="7">Both the BIR and NACHT domains are essential for effective inhibition of pro-CASP9 cleavage. BIR3 domain binds to procaspase-9 and the NACHT domain interacts with the NACHT domain of APAF1 forming a bridge between pro-CASP9 and APAF1.</text>
</comment>
<comment type="sequence caution" evidence="12">
    <conflict type="erroneous gene model prediction">
        <sequence resource="EMBL-CDS" id="AAC62261"/>
    </conflict>
</comment>
<accession>Q13075</accession>
<accession>B9EG72</accession>
<accession>E9PHD1</accession>
<accession>O75857</accession>
<accession>Q13730</accession>
<accession>Q59GI6</accession>
<accession>Q8TDZ4</accession>
<accession>Q99796</accession>
<dbReference type="EMBL" id="U19251">
    <property type="protein sequence ID" value="AAC52045.1"/>
    <property type="molecule type" value="mRNA"/>
</dbReference>
<dbReference type="EMBL" id="U80017">
    <property type="protein sequence ID" value="AAC52047.1"/>
    <property type="molecule type" value="Genomic_DNA"/>
</dbReference>
<dbReference type="EMBL" id="AC005031">
    <property type="protein sequence ID" value="AAC62261.1"/>
    <property type="status" value="ALT_SEQ"/>
    <property type="molecule type" value="Genomic_DNA"/>
</dbReference>
<dbReference type="EMBL" id="AC044797">
    <property type="status" value="NOT_ANNOTATED_CDS"/>
    <property type="molecule type" value="Genomic_DNA"/>
</dbReference>
<dbReference type="EMBL" id="BC136273">
    <property type="protein sequence ID" value="AAI36274.1"/>
    <property type="molecule type" value="mRNA"/>
</dbReference>
<dbReference type="EMBL" id="AB048534">
    <property type="protein sequence ID" value="BAB87181.1"/>
    <property type="molecule type" value="mRNA"/>
</dbReference>
<dbReference type="EMBL" id="AH003063">
    <property type="protein sequence ID" value="AAA64504.1"/>
    <property type="molecule type" value="mRNA"/>
</dbReference>
<dbReference type="EMBL" id="AB209123">
    <property type="protein sequence ID" value="BAD92360.1"/>
    <property type="molecule type" value="mRNA"/>
</dbReference>
<dbReference type="CCDS" id="CCDS4009.1">
    <molecule id="Q13075-1"/>
</dbReference>
<dbReference type="CCDS" id="CCDS43327.1">
    <molecule id="Q13075-2"/>
</dbReference>
<dbReference type="RefSeq" id="NP_001333799.1">
    <molecule id="Q13075-1"/>
    <property type="nucleotide sequence ID" value="NM_001346870.2"/>
</dbReference>
<dbReference type="RefSeq" id="NP_004527.2">
    <molecule id="Q13075-1"/>
    <property type="nucleotide sequence ID" value="NM_004536.3"/>
</dbReference>
<dbReference type="RefSeq" id="NP_075043.1">
    <molecule id="Q13075-2"/>
    <property type="nucleotide sequence ID" value="NM_022892.2"/>
</dbReference>
<dbReference type="PDB" id="2VM5">
    <property type="method" value="X-ray"/>
    <property type="resolution" value="1.80 A"/>
    <property type="chains" value="A=141-244"/>
</dbReference>
<dbReference type="PDB" id="8FVU">
    <property type="method" value="EM"/>
    <property type="resolution" value="3.60 A"/>
    <property type="chains" value="A=1-1403"/>
</dbReference>
<dbReference type="PDBsum" id="2VM5"/>
<dbReference type="PDBsum" id="8FVU"/>
<dbReference type="EMDB" id="EMD-29493"/>
<dbReference type="SMR" id="Q13075"/>
<dbReference type="BioGRID" id="110752">
    <property type="interactions" value="10"/>
</dbReference>
<dbReference type="ComplexPortal" id="CPX-4144">
    <property type="entry name" value="NLRC4 inflammasome"/>
</dbReference>
<dbReference type="CORUM" id="Q13075"/>
<dbReference type="DIP" id="DIP-59150N"/>
<dbReference type="FunCoup" id="Q13075">
    <property type="interactions" value="185"/>
</dbReference>
<dbReference type="IntAct" id="Q13075">
    <property type="interactions" value="5"/>
</dbReference>
<dbReference type="MINT" id="Q13075"/>
<dbReference type="STRING" id="9606.ENSP00000428657"/>
<dbReference type="DrugBank" id="DB16095">
    <property type="generic name" value="APG-1387"/>
</dbReference>
<dbReference type="DrugBank" id="DB12085">
    <property type="generic name" value="LCL-161"/>
</dbReference>
<dbReference type="DrugBank" id="DB16305">
    <property type="generic name" value="Xevinapant"/>
</dbReference>
<dbReference type="MEROPS" id="I32.001"/>
<dbReference type="iPTMnet" id="Q13075"/>
<dbReference type="PhosphoSitePlus" id="Q13075"/>
<dbReference type="BioMuta" id="NAIP"/>
<dbReference type="DMDM" id="109940027"/>
<dbReference type="jPOST" id="Q13075"/>
<dbReference type="MassIVE" id="Q13075"/>
<dbReference type="PaxDb" id="9606-ENSP00000428657"/>
<dbReference type="PeptideAtlas" id="Q13075"/>
<dbReference type="ProteomicsDB" id="20510"/>
<dbReference type="ProteomicsDB" id="59135">
    <molecule id="Q13075-1"/>
</dbReference>
<dbReference type="ProteomicsDB" id="74380"/>
<dbReference type="Antibodypedia" id="47753">
    <property type="antibodies" value="207 antibodies from 33 providers"/>
</dbReference>
<dbReference type="DNASU" id="4671"/>
<dbReference type="Ensembl" id="ENST00000194097.8">
    <molecule id="Q13075-1"/>
    <property type="protein sequence ID" value="ENSP00000443944.1"/>
    <property type="gene ID" value="ENSG00000249437.8"/>
</dbReference>
<dbReference type="Ensembl" id="ENST00000503719.6">
    <molecule id="Q13075-2"/>
    <property type="protein sequence ID" value="ENSP00000424913.2"/>
    <property type="gene ID" value="ENSG00000249437.8"/>
</dbReference>
<dbReference type="Ensembl" id="ENST00000517649.6">
    <molecule id="Q13075-1"/>
    <property type="protein sequence ID" value="ENSP00000428657.2"/>
    <property type="gene ID" value="ENSG00000249437.8"/>
</dbReference>
<dbReference type="Ensembl" id="ENST00000523981.5">
    <molecule id="Q13075-2"/>
    <property type="protein sequence ID" value="ENSP00000428363.1"/>
    <property type="gene ID" value="ENSG00000249437.8"/>
</dbReference>
<dbReference type="Ensembl" id="ENST00000612328.4">
    <property type="protein sequence ID" value="ENSP00000484107.1"/>
    <property type="gene ID" value="ENSG00000278613.4"/>
</dbReference>
<dbReference type="Ensembl" id="ENST00000620988.4">
    <property type="protein sequence ID" value="ENSP00000484731.1"/>
    <property type="gene ID" value="ENSG00000278613.4"/>
</dbReference>
<dbReference type="GeneID" id="4671"/>
<dbReference type="KEGG" id="hsa:4671"/>
<dbReference type="MANE-Select" id="ENST00000517649.6">
    <property type="protein sequence ID" value="ENSP00000428657.2"/>
    <property type="RefSeq nucleotide sequence ID" value="NM_004536.3"/>
    <property type="RefSeq protein sequence ID" value="NP_004527.2"/>
</dbReference>
<dbReference type="UCSC" id="uc003kar.2">
    <molecule id="Q13075-1"/>
    <property type="organism name" value="human"/>
</dbReference>
<dbReference type="AGR" id="HGNC:7634"/>
<dbReference type="CTD" id="4671"/>
<dbReference type="DisGeNET" id="4671"/>
<dbReference type="GeneCards" id="NAIP"/>
<dbReference type="HGNC" id="HGNC:7634">
    <property type="gene designation" value="NAIP"/>
</dbReference>
<dbReference type="HPA" id="ENSG00000249437">
    <property type="expression patterns" value="Tissue enhanced (lymphoid)"/>
</dbReference>
<dbReference type="MalaCards" id="NAIP"/>
<dbReference type="MIM" id="600355">
    <property type="type" value="gene"/>
</dbReference>
<dbReference type="neXtProt" id="NX_Q13075"/>
<dbReference type="OpenTargets" id="ENSG00000249437"/>
<dbReference type="Orphanet" id="83330">
    <property type="disease" value="Proximal spinal muscular atrophy type 1"/>
</dbReference>
<dbReference type="Orphanet" id="83418">
    <property type="disease" value="Proximal spinal muscular atrophy type 2"/>
</dbReference>
<dbReference type="Orphanet" id="83419">
    <property type="disease" value="Proximal spinal muscular atrophy type 3"/>
</dbReference>
<dbReference type="PharmGKB" id="PA162396805"/>
<dbReference type="VEuPathDB" id="HostDB:ENSG00000249437"/>
<dbReference type="eggNOG" id="KOG1101">
    <property type="taxonomic scope" value="Eukaryota"/>
</dbReference>
<dbReference type="GeneTree" id="ENSGT00940000163559"/>
<dbReference type="InParanoid" id="Q13075"/>
<dbReference type="OMA" id="FENWPFY"/>
<dbReference type="OrthoDB" id="4034597at2759"/>
<dbReference type="PAN-GO" id="Q13075">
    <property type="GO annotations" value="8 GO annotations based on evolutionary models"/>
</dbReference>
<dbReference type="PhylomeDB" id="Q13075"/>
<dbReference type="TreeFam" id="TF105356"/>
<dbReference type="PathwayCommons" id="Q13075"/>
<dbReference type="SignaLink" id="Q13075"/>
<dbReference type="SIGNOR" id="Q13075"/>
<dbReference type="BioGRID-ORCS" id="4671">
    <property type="hits" value="42 hits in 1149 CRISPR screens"/>
</dbReference>
<dbReference type="ChiTaRS" id="NAIP">
    <property type="organism name" value="human"/>
</dbReference>
<dbReference type="EvolutionaryTrace" id="Q13075"/>
<dbReference type="GeneWiki" id="NAIP_(gene)"/>
<dbReference type="GenomeRNAi" id="4671"/>
<dbReference type="Pharos" id="Q13075">
    <property type="development level" value="Tbio"/>
</dbReference>
<dbReference type="PRO" id="PR:Q13075"/>
<dbReference type="Proteomes" id="UP000005640">
    <property type="component" value="Chromosome 5"/>
</dbReference>
<dbReference type="RNAct" id="Q13075">
    <property type="molecule type" value="protein"/>
</dbReference>
<dbReference type="Bgee" id="ENSG00000249437">
    <property type="expression patterns" value="Expressed in monocyte and 148 other cell types or tissues"/>
</dbReference>
<dbReference type="ExpressionAtlas" id="Q13075">
    <property type="expression patterns" value="baseline and differential"/>
</dbReference>
<dbReference type="GO" id="GO:0016323">
    <property type="term" value="C:basolateral plasma membrane"/>
    <property type="evidence" value="ECO:0000250"/>
    <property type="project" value="UniProtKB"/>
</dbReference>
<dbReference type="GO" id="GO:0061702">
    <property type="term" value="C:canonical inflammasome complex"/>
    <property type="evidence" value="ECO:0000303"/>
    <property type="project" value="ComplexPortal"/>
</dbReference>
<dbReference type="GO" id="GO:0005737">
    <property type="term" value="C:cytoplasm"/>
    <property type="evidence" value="ECO:0000250"/>
    <property type="project" value="UniProtKB"/>
</dbReference>
<dbReference type="GO" id="GO:0072557">
    <property type="term" value="C:IPAF inflammasome complex"/>
    <property type="evidence" value="ECO:0000318"/>
    <property type="project" value="GO_Central"/>
</dbReference>
<dbReference type="GO" id="GO:0005524">
    <property type="term" value="F:ATP binding"/>
    <property type="evidence" value="ECO:0000315"/>
    <property type="project" value="UniProtKB"/>
</dbReference>
<dbReference type="GO" id="GO:0016887">
    <property type="term" value="F:ATP hydrolysis activity"/>
    <property type="evidence" value="ECO:0007669"/>
    <property type="project" value="InterPro"/>
</dbReference>
<dbReference type="GO" id="GO:0004869">
    <property type="term" value="F:cysteine-type endopeptidase inhibitor activity"/>
    <property type="evidence" value="ECO:0007669"/>
    <property type="project" value="UniProtKB-KW"/>
</dbReference>
<dbReference type="GO" id="GO:0043027">
    <property type="term" value="F:cysteine-type endopeptidase inhibitor activity involved in apoptotic process"/>
    <property type="evidence" value="ECO:0000318"/>
    <property type="project" value="GO_Central"/>
</dbReference>
<dbReference type="GO" id="GO:0046872">
    <property type="term" value="F:metal ion binding"/>
    <property type="evidence" value="ECO:0007669"/>
    <property type="project" value="UniProtKB-KW"/>
</dbReference>
<dbReference type="GO" id="GO:0120283">
    <property type="term" value="F:protein serine/threonine kinase binding"/>
    <property type="evidence" value="ECO:0000353"/>
    <property type="project" value="UniProtKB"/>
</dbReference>
<dbReference type="GO" id="GO:0006915">
    <property type="term" value="P:apoptotic process"/>
    <property type="evidence" value="ECO:0007669"/>
    <property type="project" value="UniProtKB-KW"/>
</dbReference>
<dbReference type="GO" id="GO:0042742">
    <property type="term" value="P:defense response to bacterium"/>
    <property type="evidence" value="ECO:0000318"/>
    <property type="project" value="GO_Central"/>
</dbReference>
<dbReference type="GO" id="GO:0016045">
    <property type="term" value="P:detection of bacterium"/>
    <property type="evidence" value="ECO:0000318"/>
    <property type="project" value="GO_Central"/>
</dbReference>
<dbReference type="GO" id="GO:0046456">
    <property type="term" value="P:icosanoid biosynthetic process"/>
    <property type="evidence" value="ECO:0000303"/>
    <property type="project" value="ComplexPortal"/>
</dbReference>
<dbReference type="GO" id="GO:0045087">
    <property type="term" value="P:innate immune response"/>
    <property type="evidence" value="ECO:0007669"/>
    <property type="project" value="UniProtKB-KW"/>
</dbReference>
<dbReference type="GO" id="GO:0043066">
    <property type="term" value="P:negative regulation of apoptotic process"/>
    <property type="evidence" value="ECO:0000314"/>
    <property type="project" value="UniProtKB"/>
</dbReference>
<dbReference type="GO" id="GO:0043524">
    <property type="term" value="P:negative regulation of neuron apoptotic process"/>
    <property type="evidence" value="ECO:0000304"/>
    <property type="project" value="UniProtKB"/>
</dbReference>
<dbReference type="GO" id="GO:0010804">
    <property type="term" value="P:negative regulation of tumor necrosis factor-mediated signaling pathway"/>
    <property type="evidence" value="ECO:0000314"/>
    <property type="project" value="UniProtKB"/>
</dbReference>
<dbReference type="GO" id="GO:0007399">
    <property type="term" value="P:nervous system development"/>
    <property type="evidence" value="ECO:0000304"/>
    <property type="project" value="ProtInc"/>
</dbReference>
<dbReference type="GO" id="GO:0002221">
    <property type="term" value="P:pattern recognition receptor signaling pathway"/>
    <property type="evidence" value="ECO:0000303"/>
    <property type="project" value="ComplexPortal"/>
</dbReference>
<dbReference type="GO" id="GO:0050729">
    <property type="term" value="P:positive regulation of inflammatory response"/>
    <property type="evidence" value="ECO:0000303"/>
    <property type="project" value="ComplexPortal"/>
</dbReference>
<dbReference type="GO" id="GO:0032731">
    <property type="term" value="P:positive regulation of interleukin-1 beta production"/>
    <property type="evidence" value="ECO:0000303"/>
    <property type="project" value="ComplexPortal"/>
</dbReference>
<dbReference type="GO" id="GO:0046330">
    <property type="term" value="P:positive regulation of JNK cascade"/>
    <property type="evidence" value="ECO:0000314"/>
    <property type="project" value="UniProtKB"/>
</dbReference>
<dbReference type="GO" id="GO:0070269">
    <property type="term" value="P:pyroptotic inflammatory response"/>
    <property type="evidence" value="ECO:0000318"/>
    <property type="project" value="GO_Central"/>
</dbReference>
<dbReference type="GO" id="GO:0042981">
    <property type="term" value="P:regulation of apoptotic process"/>
    <property type="evidence" value="ECO:0000314"/>
    <property type="project" value="UniProtKB"/>
</dbReference>
<dbReference type="CDD" id="cd00022">
    <property type="entry name" value="BIR"/>
    <property type="match status" value="3"/>
</dbReference>
<dbReference type="FunFam" id="1.10.1170.10:FF:000007">
    <property type="entry name" value="Baculoviral IAP repeat-containing protein 1"/>
    <property type="match status" value="2"/>
</dbReference>
<dbReference type="FunFam" id="1.10.1170.10:FF:000013">
    <property type="entry name" value="Baculoviral IAP repeat-containing protein 1"/>
    <property type="match status" value="1"/>
</dbReference>
<dbReference type="FunFam" id="3.40.50.300:FF:001126">
    <property type="entry name" value="Baculoviral IAP repeat-containing protein 1"/>
    <property type="match status" value="1"/>
</dbReference>
<dbReference type="FunFam" id="3.80.10.10:FF:000316">
    <property type="entry name" value="Baculoviral IAP repeat-containing protein 1"/>
    <property type="match status" value="1"/>
</dbReference>
<dbReference type="Gene3D" id="1.10.1170.10">
    <property type="entry name" value="Inhibitor Of Apoptosis Protein (2mihbC-IAP-1), Chain A"/>
    <property type="match status" value="3"/>
</dbReference>
<dbReference type="Gene3D" id="3.40.50.300">
    <property type="entry name" value="P-loop containing nucleotide triphosphate hydrolases"/>
    <property type="match status" value="1"/>
</dbReference>
<dbReference type="Gene3D" id="3.80.10.10">
    <property type="entry name" value="Ribonuclease Inhibitor"/>
    <property type="match status" value="1"/>
</dbReference>
<dbReference type="InterPro" id="IPR003593">
    <property type="entry name" value="AAA+_ATPase"/>
</dbReference>
<dbReference type="InterPro" id="IPR001370">
    <property type="entry name" value="BIR_rpt"/>
</dbReference>
<dbReference type="InterPro" id="IPR032675">
    <property type="entry name" value="LRR_dom_sf"/>
</dbReference>
<dbReference type="InterPro" id="IPR007111">
    <property type="entry name" value="NACHT_NTPase"/>
</dbReference>
<dbReference type="InterPro" id="IPR028789">
    <property type="entry name" value="Naip"/>
</dbReference>
<dbReference type="InterPro" id="IPR053882">
    <property type="entry name" value="Nlrc4-like_WHD"/>
</dbReference>
<dbReference type="InterPro" id="IPR040535">
    <property type="entry name" value="NLRC4_HD"/>
</dbReference>
<dbReference type="InterPro" id="IPR027417">
    <property type="entry name" value="P-loop_NTPase"/>
</dbReference>
<dbReference type="PANTHER" id="PTHR46914">
    <property type="entry name" value="BACULOVIRAL IAP REPEAT-CONTAINING PROTEIN 1"/>
    <property type="match status" value="1"/>
</dbReference>
<dbReference type="PANTHER" id="PTHR46914:SF1">
    <property type="entry name" value="BACULOVIRAL IAP REPEAT-CONTAINING PROTEIN 1"/>
    <property type="match status" value="1"/>
</dbReference>
<dbReference type="Pfam" id="PF00653">
    <property type="entry name" value="BIR"/>
    <property type="match status" value="3"/>
</dbReference>
<dbReference type="Pfam" id="PF05729">
    <property type="entry name" value="NACHT"/>
    <property type="match status" value="1"/>
</dbReference>
<dbReference type="Pfam" id="PF22524">
    <property type="entry name" value="Nlrc4-like_WHD"/>
    <property type="match status" value="1"/>
</dbReference>
<dbReference type="Pfam" id="PF17889">
    <property type="entry name" value="NLRC4_HD"/>
    <property type="match status" value="1"/>
</dbReference>
<dbReference type="SMART" id="SM00382">
    <property type="entry name" value="AAA"/>
    <property type="match status" value="1"/>
</dbReference>
<dbReference type="SMART" id="SM00238">
    <property type="entry name" value="BIR"/>
    <property type="match status" value="3"/>
</dbReference>
<dbReference type="SUPFAM" id="SSF57924">
    <property type="entry name" value="Inhibitor of apoptosis (IAP) repeat"/>
    <property type="match status" value="3"/>
</dbReference>
<dbReference type="SUPFAM" id="SSF52540">
    <property type="entry name" value="P-loop containing nucleoside triphosphate hydrolases"/>
    <property type="match status" value="1"/>
</dbReference>
<dbReference type="SUPFAM" id="SSF52047">
    <property type="entry name" value="RNI-like"/>
    <property type="match status" value="1"/>
</dbReference>
<dbReference type="PROSITE" id="PS01282">
    <property type="entry name" value="BIR_REPEAT_1"/>
    <property type="match status" value="3"/>
</dbReference>
<dbReference type="PROSITE" id="PS50143">
    <property type="entry name" value="BIR_REPEAT_2"/>
    <property type="match status" value="3"/>
</dbReference>
<dbReference type="PROSITE" id="PS50837">
    <property type="entry name" value="NACHT"/>
    <property type="match status" value="1"/>
</dbReference>
<organism>
    <name type="scientific">Homo sapiens</name>
    <name type="common">Human</name>
    <dbReference type="NCBI Taxonomy" id="9606"/>
    <lineage>
        <taxon>Eukaryota</taxon>
        <taxon>Metazoa</taxon>
        <taxon>Chordata</taxon>
        <taxon>Craniata</taxon>
        <taxon>Vertebrata</taxon>
        <taxon>Euteleostomi</taxon>
        <taxon>Mammalia</taxon>
        <taxon>Eutheria</taxon>
        <taxon>Euarchontoglires</taxon>
        <taxon>Primates</taxon>
        <taxon>Haplorrhini</taxon>
        <taxon>Catarrhini</taxon>
        <taxon>Hominidae</taxon>
        <taxon>Homo</taxon>
    </lineage>
</organism>
<sequence length="1403" mass="159582">MATQQKASDERISQFDHNLLPELSALLGLDAVQLAKELEEEEQKERAKMQKGYNSQMRSEAKRLKTFVTYEPYSSWIPQEMAAAGFYFTGVKSGIQCFCCSLILFGAGLTRLPIEDHKRFHPDCGFLLNKDVGNIAKYDIRVKNLKSRLRGGKMRYQEEEARLASFRNWPFYVQGISPCVLSEAGFVFTGKQDTVQCFSCGGCLGNWEEGDDPWKEHAKWFPKCEFLRSKKSSEEITQYIQSYKGFVDITGEHFVNSWVQRELPMASAYCNDSIFAYEELRLDSFKDWPRESAVGVAALAKAGLFYTGIKDIVQCFSCGGCLEKWQEGDDPLDDHTRCFPNCPFLQNMKSSAEVTPDLQSRGELCELLETTSESNLEDSIAVGPIVPEMAQGEAQWFQEAKNLNEQLRAAYTSASFRHMSLLDISSDLATDHLLGCDLSIASKHISKPVQEPLVLPEVFGNLNSVMCVEGEAGSGKTVLLKKIAFLWASGCCPLLNRFQLVFYLSLSSTRPDEGLASIICDQLLEKEGSVTEMCVRNIIQQLKNQVLFLLDDYKEICSIPQVIGKLIQKNHLSRTCLLIAVRTNRARDIRRYLETILEIKAFPFYNTVCILRKLFSHNMTRLRKFMVYFGKNQSLQKIQKTPLFVAAICAHWFQYPFDPSFDDVAVFKSYMERLSLRNKATAEILKATVSSCGELALKGFFSCCFEFNDDDLAEAGVDEDEDLTMCLMSKFTAQRLRPFYRFLSPAFQEFLAGMRLIELLDSDRQEHQDLGLYHLKQINSPMMTVSAYNNFLNYVSSLPSTKAGPKIVSHLLHLVDNKESLENISENDDYLKHQPEISLQMQLLRGLWQICPQAYFSMVSEHLLVLALKTAYQSNTVAACSPFVLQFLQGRTLTLGALNLQYFFDHPESLSLLRSIHFPIRGNKTSPRAHFSVLETCFDKSQVPTIDQDYASAFEPMNEWERNLAEKEDNVKSYMDMQRRASPDLSTGYWKLSPKQYKIPCLEVDVNDIDVVGQDMLEILMTVFSASQRIELHLNHSRGFIESIRPALELSKASVTKCSISKLELSAAEQELLLTLPSLESLEVSGTIQSQDQIFPNLDKFLCLKELSVDLEGNINVFSVIPEEFPNFHHMEKLLIQISAEYDPSKLVKLIQNSPNLHVFHLKCNFFSDFGSLMTMLVSCKKLTEIKFSDSFFQAVPFVASLPNFISLKILNLEGQQFPDEETSEKFAYILGSLSNLEELILPTGDGIYRVAKLIIQQCQQLHCLRVLSFFKTLNDDSVVEIAKVAISGGFQKLENLKLSINHKITEEGYRNFFQALDNMPNLQELDISRHFTECIKAQATTVKSLSQCVLRLPRLIRLNMLSWLLDADDIALLNVMKERHPQSKYLTILQKWILPFSPIIQK</sequence>
<name>BIRC1_HUMAN</name>
<proteinExistence type="evidence at protein level"/>
<evidence type="ECO:0000250" key="1">
    <source>
        <dbReference type="UniProtKB" id="Q3UP24"/>
    </source>
</evidence>
<evidence type="ECO:0000255" key="2">
    <source>
        <dbReference type="PROSITE-ProRule" id="PRU00136"/>
    </source>
</evidence>
<evidence type="ECO:0000269" key="3">
    <source>
    </source>
</evidence>
<evidence type="ECO:0000269" key="4">
    <source>
    </source>
</evidence>
<evidence type="ECO:0000269" key="5">
    <source>
    </source>
</evidence>
<evidence type="ECO:0000269" key="6">
    <source>
    </source>
</evidence>
<evidence type="ECO:0000269" key="7">
    <source>
    </source>
</evidence>
<evidence type="ECO:0000269" key="8">
    <source>
    </source>
</evidence>
<evidence type="ECO:0000269" key="9">
    <source>
    </source>
</evidence>
<evidence type="ECO:0000269" key="10">
    <source>
    </source>
</evidence>
<evidence type="ECO:0000303" key="11">
    <source>
    </source>
</evidence>
<evidence type="ECO:0000305" key="12"/>
<evidence type="ECO:0007829" key="13">
    <source>
        <dbReference type="PDB" id="2VM5"/>
    </source>
</evidence>
<protein>
    <recommendedName>
        <fullName>Baculoviral IAP repeat-containing protein 1</fullName>
    </recommendedName>
    <alternativeName>
        <fullName>Neuronal apoptosis inhibitory protein</fullName>
    </alternativeName>
</protein>
<gene>
    <name type="primary">NAIP</name>
    <name type="synonym">BIRC1</name>
</gene>
<feature type="chain" id="PRO_0000122341" description="Baculoviral IAP repeat-containing protein 1">
    <location>
        <begin position="1"/>
        <end position="1403"/>
    </location>
</feature>
<feature type="repeat" description="BIR 1">
    <location>
        <begin position="60"/>
        <end position="127"/>
    </location>
</feature>
<feature type="repeat" description="BIR 2">
    <location>
        <begin position="159"/>
        <end position="227"/>
    </location>
</feature>
<feature type="repeat" description="BIR 3">
    <location>
        <begin position="278"/>
        <end position="345"/>
    </location>
</feature>
<feature type="domain" description="NACHT" evidence="2">
    <location>
        <begin position="464"/>
        <end position="758"/>
    </location>
</feature>
<feature type="binding site">
    <location>
        <position position="315"/>
    </location>
    <ligand>
        <name>Zn(2+)</name>
        <dbReference type="ChEBI" id="CHEBI:29105"/>
    </ligand>
</feature>
<feature type="binding site">
    <location>
        <position position="318"/>
    </location>
    <ligand>
        <name>Zn(2+)</name>
        <dbReference type="ChEBI" id="CHEBI:29105"/>
    </ligand>
</feature>
<feature type="binding site">
    <location>
        <position position="335"/>
    </location>
    <ligand>
        <name>Zn(2+)</name>
        <dbReference type="ChEBI" id="CHEBI:29105"/>
    </ligand>
</feature>
<feature type="binding site">
    <location>
        <position position="342"/>
    </location>
    <ligand>
        <name>Zn(2+)</name>
        <dbReference type="ChEBI" id="CHEBI:29105"/>
    </ligand>
</feature>
<feature type="binding site" evidence="1">
    <location>
        <begin position="473"/>
        <end position="478"/>
    </location>
    <ligand>
        <name>ATP</name>
        <dbReference type="ChEBI" id="CHEBI:30616"/>
    </ligand>
</feature>
<feature type="splice variant" id="VSP_047196" description="In isoform 2." evidence="11">
    <original>MATQQKASDERISQFDHNLLPELSALLGLDAVQLAKELEEEEQKERAKMQKGYNSQMRSEA</original>
    <variation>MPLHIGDFVWDSKVHSLQSSLNIFSLLPTKGRTEHLFFSHILSFHWPAFSSIRLELWINLR</variation>
    <location>
        <begin position="1"/>
        <end position="61"/>
    </location>
</feature>
<feature type="splice variant" id="VSP_047197" description="In isoform 2." evidence="11">
    <location>
        <begin position="62"/>
        <end position="223"/>
    </location>
</feature>
<feature type="sequence variant" id="VAR_026477" description="In dbSNP:rs1423904967." evidence="3 4 5 9 10">
    <original>V</original>
    <variation>M</variation>
    <location>
        <position position="535"/>
    </location>
</feature>
<feature type="mutagenesis site" description="Prevents the proper cleavage of pro-CASP9, but does not inhibit the cleavage of pro-CASP3 by CASP9." evidence="7">
    <original>K</original>
    <variation>T</variation>
    <location>
        <position position="476"/>
    </location>
</feature>
<feature type="sequence conflict" description="In Ref. 6; AAA64504." evidence="12" ref="6">
    <original>VP</original>
    <variation>ST</variation>
    <location>
        <begin position="386"/>
        <end position="387"/>
    </location>
</feature>
<feature type="sequence conflict" description="In Ref. 6; AAA64504." evidence="12" ref="6">
    <original>Y</original>
    <variation>H</variation>
    <location>
        <position position="553"/>
    </location>
</feature>
<feature type="sequence conflict" description="In Ref. 7; BAD92360." evidence="12" ref="7">
    <original>IQ</original>
    <variation>FK</variation>
    <location>
        <begin position="567"/>
        <end position="568"/>
    </location>
</feature>
<feature type="sequence conflict" description="In Ref. 7; BAD92360." evidence="12" ref="7">
    <original>P</original>
    <variation>S</variation>
    <location>
        <position position="919"/>
    </location>
</feature>
<feature type="sequence conflict" description="In Ref. 7; BAD92360." evidence="12" ref="7">
    <original>S</original>
    <variation>T</variation>
    <location>
        <position position="1066"/>
    </location>
</feature>
<feature type="helix" evidence="13">
    <location>
        <begin position="159"/>
        <end position="164"/>
    </location>
</feature>
<feature type="helix" evidence="13">
    <location>
        <begin position="165"/>
        <end position="168"/>
    </location>
</feature>
<feature type="helix" evidence="13">
    <location>
        <begin position="171"/>
        <end position="173"/>
    </location>
</feature>
<feature type="helix" evidence="13">
    <location>
        <begin position="178"/>
        <end position="183"/>
    </location>
</feature>
<feature type="strand" evidence="13">
    <location>
        <begin position="186"/>
        <end position="188"/>
    </location>
</feature>
<feature type="strand" evidence="13">
    <location>
        <begin position="195"/>
        <end position="197"/>
    </location>
</feature>
<feature type="turn" evidence="13">
    <location>
        <begin position="198"/>
        <end position="200"/>
    </location>
</feature>
<feature type="strand" evidence="13">
    <location>
        <begin position="203"/>
        <end position="206"/>
    </location>
</feature>
<feature type="helix" evidence="13">
    <location>
        <begin position="213"/>
        <end position="220"/>
    </location>
</feature>
<feature type="helix" evidence="13">
    <location>
        <begin position="225"/>
        <end position="231"/>
    </location>
</feature>
<reference key="1">
    <citation type="journal article" date="1995" name="Cell">
        <title>The gene for neuronal apoptosis inhibitory protein is partially deleted in individuals with spinal muscular atrophy.</title>
        <authorList>
            <person name="Roy N."/>
            <person name="Mahadevan M.S."/>
            <person name="McLean M."/>
            <person name="Shutler G."/>
            <person name="Yaraghi Z."/>
            <person name="Farahini R."/>
            <person name="Baird S."/>
            <person name="Besner-Johnston A."/>
            <person name="Lefebvre C."/>
            <person name="Kang X."/>
            <person name="Salih M."/>
            <person name="Aubry H."/>
            <person name="Tamai K."/>
            <person name="Guan X."/>
            <person name="Ioannou P."/>
            <person name="Crawford T.O."/>
            <person name="de Jong P.J."/>
            <person name="Surh L."/>
            <person name="Ikeda J."/>
            <person name="Korneluk R.G."/>
            <person name="Mackenzie A."/>
        </authorList>
    </citation>
    <scope>NUCLEOTIDE SEQUENCE [MRNA] (ISOFORM 1)</scope>
    <scope>VARIANT MET-535</scope>
    <scope>POSSIBLE ROLE IN THE PROTECTION FROM SPINAL MUSCULAR ATROPHY</scope>
    <source>
        <tissue>Fetal brain</tissue>
    </source>
</reference>
<reference key="2">
    <citation type="journal article" date="1998" name="Genomics">
        <title>Sequence of a 131-kb region of 5q13.1 containing the spinal muscular atrophy candidate genes SMN and NAIP.</title>
        <authorList>
            <person name="Chen Q."/>
            <person name="Baird S.D."/>
            <person name="Mahadevan M."/>
            <person name="Besner-Johnston A."/>
            <person name="Farahani R."/>
            <person name="Xuan J.-Y."/>
            <person name="Kang X."/>
            <person name="Lefebvre C."/>
            <person name="Ikeda J.-E."/>
            <person name="Korneluk R.G."/>
            <person name="MacKenzie A.E."/>
        </authorList>
    </citation>
    <scope>NUCLEOTIDE SEQUENCE [GENOMIC DNA]</scope>
    <scope>SEQUENCE REVISION</scope>
    <scope>VARIANT MET-535</scope>
    <source>
        <tissue>Brain</tissue>
    </source>
</reference>
<reference key="3">
    <citation type="journal article" date="2004" name="Nature">
        <title>The DNA sequence and comparative analysis of human chromosome 5.</title>
        <authorList>
            <person name="Schmutz J."/>
            <person name="Martin J."/>
            <person name="Terry A."/>
            <person name="Couronne O."/>
            <person name="Grimwood J."/>
            <person name="Lowry S."/>
            <person name="Gordon L.A."/>
            <person name="Scott D."/>
            <person name="Xie G."/>
            <person name="Huang W."/>
            <person name="Hellsten U."/>
            <person name="Tran-Gyamfi M."/>
            <person name="She X."/>
            <person name="Prabhakar S."/>
            <person name="Aerts A."/>
            <person name="Altherr M."/>
            <person name="Bajorek E."/>
            <person name="Black S."/>
            <person name="Branscomb E."/>
            <person name="Caoile C."/>
            <person name="Challacombe J.F."/>
            <person name="Chan Y.M."/>
            <person name="Denys M."/>
            <person name="Detter J.C."/>
            <person name="Escobar J."/>
            <person name="Flowers D."/>
            <person name="Fotopulos D."/>
            <person name="Glavina T."/>
            <person name="Gomez M."/>
            <person name="Gonzales E."/>
            <person name="Goodstein D."/>
            <person name="Grigoriev I."/>
            <person name="Groza M."/>
            <person name="Hammon N."/>
            <person name="Hawkins T."/>
            <person name="Haydu L."/>
            <person name="Israni S."/>
            <person name="Jett J."/>
            <person name="Kadner K."/>
            <person name="Kimball H."/>
            <person name="Kobayashi A."/>
            <person name="Lopez F."/>
            <person name="Lou Y."/>
            <person name="Martinez D."/>
            <person name="Medina C."/>
            <person name="Morgan J."/>
            <person name="Nandkeshwar R."/>
            <person name="Noonan J.P."/>
            <person name="Pitluck S."/>
            <person name="Pollard M."/>
            <person name="Predki P."/>
            <person name="Priest J."/>
            <person name="Ramirez L."/>
            <person name="Retterer J."/>
            <person name="Rodriguez A."/>
            <person name="Rogers S."/>
            <person name="Salamov A."/>
            <person name="Salazar A."/>
            <person name="Thayer N."/>
            <person name="Tice H."/>
            <person name="Tsai M."/>
            <person name="Ustaszewska A."/>
            <person name="Vo N."/>
            <person name="Wheeler J."/>
            <person name="Wu K."/>
            <person name="Yang J."/>
            <person name="Dickson M."/>
            <person name="Cheng J.-F."/>
            <person name="Eichler E.E."/>
            <person name="Olsen A."/>
            <person name="Pennacchio L.A."/>
            <person name="Rokhsar D.S."/>
            <person name="Richardson P."/>
            <person name="Lucas S.M."/>
            <person name="Myers R.M."/>
            <person name="Rubin E.M."/>
        </authorList>
    </citation>
    <scope>NUCLEOTIDE SEQUENCE [LARGE SCALE GENOMIC DNA]</scope>
    <scope>VARIANT MET-535</scope>
</reference>
<reference key="4">
    <citation type="journal article" date="2004" name="Genome Res.">
        <title>The status, quality, and expansion of the NIH full-length cDNA project: the Mammalian Gene Collection (MGC).</title>
        <authorList>
            <consortium name="The MGC Project Team"/>
        </authorList>
    </citation>
    <scope>NUCLEOTIDE SEQUENCE [LARGE SCALE MRNA] (ISOFORM 1)</scope>
    <scope>VARIANT MET-535</scope>
    <source>
        <tissue>Testis</tissue>
    </source>
</reference>
<reference key="5">
    <citation type="journal article" date="2002" name="Biochim. Biophys. Acta">
        <title>Functional human NAIP promoter transcription regulatory elements for the NAIP and PsiNAIP genes.</title>
        <authorList>
            <person name="Xu M."/>
            <person name="Okada T."/>
            <person name="Sakai H."/>
            <person name="Miyamoto N."/>
            <person name="Yanagisawa Y."/>
            <person name="MacKenzie A.E."/>
            <person name="Hadano S."/>
            <person name="Ikeda J.-E."/>
        </authorList>
    </citation>
    <scope>NUCLEOTIDE SEQUENCE [MRNA] OF 1-1160 (ISOFORM 2)</scope>
    <scope>VARIANT MET-535</scope>
</reference>
<reference key="6">
    <citation type="journal article" date="1995" name="Eur. J. Hum. Genet.">
        <title>A provisional transcript map of the spinal muscular atrophy (SMA) critical region.</title>
        <authorList>
            <person name="van der Steege G."/>
            <person name="Draaijers T.G."/>
            <person name="Grootscholten P.M."/>
            <person name="Osinga J."/>
            <person name="Anzevino R."/>
            <person name="Velona I."/>
            <person name="Den Dunnen J.T."/>
            <person name="Scheffer H."/>
            <person name="Brahe C."/>
            <person name="van Ommen G.J.B."/>
            <person name="Buys C.H.C.M."/>
        </authorList>
    </citation>
    <scope>NUCLEOTIDE SEQUENCE [MRNA] OF 386-623 (ISOFORM 1/2)</scope>
    <source>
        <tissue>Pre-B cell</tissue>
    </source>
</reference>
<reference key="7">
    <citation type="submission" date="2005-03" db="EMBL/GenBank/DDBJ databases">
        <authorList>
            <person name="Totoki Y."/>
            <person name="Toyoda A."/>
            <person name="Takeda T."/>
            <person name="Sakaki Y."/>
            <person name="Tanaka A."/>
            <person name="Yokoyama S."/>
            <person name="Ohara O."/>
            <person name="Nagase T."/>
            <person name="Kikuno R.F."/>
        </authorList>
    </citation>
    <scope>NUCLEOTIDE SEQUENCE [LARGE SCALE MRNA] OF 567-1403 (ISOFORM 1/2)</scope>
    <source>
        <tissue>Brain</tissue>
    </source>
</reference>
<reference key="8">
    <citation type="journal article" date="1996" name="Nature">
        <title>Suppression of apoptosis in mammalian cells by NAIP and a related family of IAP genes.</title>
        <authorList>
            <person name="Liston P."/>
            <person name="Roy N."/>
            <person name="Tamai K."/>
            <person name="Lefebvre C."/>
            <person name="Baird S."/>
            <person name="Cherton-Horvat G."/>
            <person name="Farahani R."/>
            <person name="McLean M."/>
            <person name="Ikeda J."/>
            <person name="Mackenzie A."/>
            <person name="Korneluk R.G."/>
        </authorList>
    </citation>
    <scope>FUNCTION</scope>
    <source>
        <tissue>Liver</tissue>
    </source>
</reference>
<reference key="9">
    <citation type="journal article" date="2002" name="J. Neurosci.">
        <title>The neuronal apoptosis inhibitory protein is a direct inhibitor of caspases 3 and 7.</title>
        <authorList>
            <person name="Maier J.K."/>
            <person name="Lahoua Z."/>
            <person name="Gendron N.H."/>
            <person name="Fetni R."/>
            <person name="Johnston A."/>
            <person name="Davoodi J."/>
            <person name="Rasper D."/>
            <person name="Roy S."/>
            <person name="Slack R.S."/>
            <person name="Nicholson D.W."/>
            <person name="MacKenzie A.E."/>
        </authorList>
    </citation>
    <scope>FUNCTION</scope>
</reference>
<reference key="10">
    <citation type="journal article" date="2008" name="Cell Cycle">
        <title>IAPs: more than just inhibitors of apoptosis proteins.</title>
        <authorList>
            <person name="Dubrez-Daloz L."/>
            <person name="Dupoux A."/>
            <person name="Cartier J."/>
        </authorList>
    </citation>
    <scope>REVIEW ON FUNCTION</scope>
</reference>
<reference key="11">
    <citation type="journal article" date="2011" name="Biochem. Biophys. Res. Commun.">
        <title>Integrity of ATP binding site is essential for effective inhibition of the intrinsic apoptosis pathway by NAIP.</title>
        <authorList>
            <person name="Karimpour S."/>
            <person name="Davoodi J."/>
            <person name="Ghahremani M.H."/>
        </authorList>
    </citation>
    <scope>FUNCTION</scope>
    <scope>INTERACTION WITH APAF1</scope>
    <scope>DOMAIN BIR3 AND NACHT</scope>
    <scope>MUTAGENESIS OF LYS-476</scope>
</reference>
<reference key="12">
    <citation type="journal article" date="2011" name="Nature">
        <title>The NLRC4 inflammasome receptors for bacterial flagellin and type III secretion apparatus.</title>
        <authorList>
            <person name="Zhao Y."/>
            <person name="Yang J."/>
            <person name="Shi J."/>
            <person name="Gong Y.N."/>
            <person name="Lu Q."/>
            <person name="Xu H."/>
            <person name="Liu L."/>
            <person name="Shao F."/>
        </authorList>
    </citation>
    <scope>FUNCTION IN INFLAMMASOME</scope>
    <scope>INTERACTION WITH C.VIOLACEUM CPRI</scope>
</reference>
<reference key="13">
    <citation type="journal article" date="2012" name="Microbes Infect.">
        <title>The human apoptosis inhibitor NAIP induces pyroptosis in macrophages infected with Legionella pneumophila.</title>
        <authorList>
            <person name="Katagiri N."/>
            <person name="Shobuike T."/>
            <person name="Chang B."/>
            <person name="Kukita A."/>
            <person name="Miyamoto H."/>
        </authorList>
    </citation>
    <scope>FUNCTION IN INFLAMMASOME</scope>
</reference>
<reference key="14">
    <citation type="journal article" date="2009" name="Acta Crystallogr. F">
        <title>Structures of BIR domains from human NAIP and cIAP2.</title>
        <authorList>
            <person name="Herman M.D."/>
            <person name="Moche M."/>
            <person name="Flodin S."/>
            <person name="Welin M."/>
            <person name="Tresaugues L."/>
            <person name="Johansson I."/>
            <person name="Nilsson M."/>
            <person name="Nordlund P."/>
            <person name="Nyman T."/>
        </authorList>
    </citation>
    <scope>X-RAY CRYSTALLOGRAPHY (1.8 ANGSTROMS) OF 141-244 IN COMPLEX WITH ZINC IONS</scope>
</reference>